<protein>
    <recommendedName>
        <fullName evidence="1">Urocanate hydratase</fullName>
        <shortName evidence="1">Urocanase</shortName>
        <ecNumber evidence="1">4.2.1.49</ecNumber>
    </recommendedName>
    <alternativeName>
        <fullName evidence="1">Imidazolonepropionate hydrolase</fullName>
    </alternativeName>
</protein>
<evidence type="ECO:0000255" key="1">
    <source>
        <dbReference type="HAMAP-Rule" id="MF_00577"/>
    </source>
</evidence>
<proteinExistence type="inferred from homology"/>
<gene>
    <name evidence="1" type="primary">hutU</name>
    <name type="ordered locus">Pput_4907</name>
</gene>
<feature type="chain" id="PRO_1000025143" description="Urocanate hydratase">
    <location>
        <begin position="1"/>
        <end position="557"/>
    </location>
</feature>
<feature type="active site" evidence="1">
    <location>
        <position position="411"/>
    </location>
</feature>
<feature type="binding site" evidence="1">
    <location>
        <begin position="53"/>
        <end position="54"/>
    </location>
    <ligand>
        <name>NAD(+)</name>
        <dbReference type="ChEBI" id="CHEBI:57540"/>
    </ligand>
</feature>
<feature type="binding site" evidence="1">
    <location>
        <position position="131"/>
    </location>
    <ligand>
        <name>NAD(+)</name>
        <dbReference type="ChEBI" id="CHEBI:57540"/>
    </ligand>
</feature>
<feature type="binding site" evidence="1">
    <location>
        <begin position="177"/>
        <end position="179"/>
    </location>
    <ligand>
        <name>NAD(+)</name>
        <dbReference type="ChEBI" id="CHEBI:57540"/>
    </ligand>
</feature>
<feature type="binding site" evidence="1">
    <location>
        <position position="197"/>
    </location>
    <ligand>
        <name>NAD(+)</name>
        <dbReference type="ChEBI" id="CHEBI:57540"/>
    </ligand>
</feature>
<feature type="binding site" evidence="1">
    <location>
        <position position="202"/>
    </location>
    <ligand>
        <name>NAD(+)</name>
        <dbReference type="ChEBI" id="CHEBI:57540"/>
    </ligand>
</feature>
<feature type="binding site" evidence="1">
    <location>
        <begin position="243"/>
        <end position="244"/>
    </location>
    <ligand>
        <name>NAD(+)</name>
        <dbReference type="ChEBI" id="CHEBI:57540"/>
    </ligand>
</feature>
<feature type="binding site" evidence="1">
    <location>
        <begin position="264"/>
        <end position="268"/>
    </location>
    <ligand>
        <name>NAD(+)</name>
        <dbReference type="ChEBI" id="CHEBI:57540"/>
    </ligand>
</feature>
<feature type="binding site" evidence="1">
    <location>
        <begin position="274"/>
        <end position="275"/>
    </location>
    <ligand>
        <name>NAD(+)</name>
        <dbReference type="ChEBI" id="CHEBI:57540"/>
    </ligand>
</feature>
<feature type="binding site" evidence="1">
    <location>
        <position position="323"/>
    </location>
    <ligand>
        <name>NAD(+)</name>
        <dbReference type="ChEBI" id="CHEBI:57540"/>
    </ligand>
</feature>
<feature type="binding site" evidence="1">
    <location>
        <position position="493"/>
    </location>
    <ligand>
        <name>NAD(+)</name>
        <dbReference type="ChEBI" id="CHEBI:57540"/>
    </ligand>
</feature>
<dbReference type="EC" id="4.2.1.49" evidence="1"/>
<dbReference type="EMBL" id="CP000712">
    <property type="protein sequence ID" value="ABQ81027.1"/>
    <property type="molecule type" value="Genomic_DNA"/>
</dbReference>
<dbReference type="SMR" id="A5WA67"/>
<dbReference type="KEGG" id="ppf:Pput_4907"/>
<dbReference type="eggNOG" id="COG2987">
    <property type="taxonomic scope" value="Bacteria"/>
</dbReference>
<dbReference type="HOGENOM" id="CLU_018868_0_1_6"/>
<dbReference type="UniPathway" id="UPA00379">
    <property type="reaction ID" value="UER00550"/>
</dbReference>
<dbReference type="GO" id="GO:0005737">
    <property type="term" value="C:cytoplasm"/>
    <property type="evidence" value="ECO:0007669"/>
    <property type="project" value="UniProtKB-SubCell"/>
</dbReference>
<dbReference type="GO" id="GO:0016153">
    <property type="term" value="F:urocanate hydratase activity"/>
    <property type="evidence" value="ECO:0007669"/>
    <property type="project" value="UniProtKB-UniRule"/>
</dbReference>
<dbReference type="GO" id="GO:0019556">
    <property type="term" value="P:L-histidine catabolic process to glutamate and formamide"/>
    <property type="evidence" value="ECO:0007669"/>
    <property type="project" value="UniProtKB-UniPathway"/>
</dbReference>
<dbReference type="GO" id="GO:0019557">
    <property type="term" value="P:L-histidine catabolic process to glutamate and formate"/>
    <property type="evidence" value="ECO:0007669"/>
    <property type="project" value="UniProtKB-UniPathway"/>
</dbReference>
<dbReference type="FunFam" id="3.40.50.10730:FF:000001">
    <property type="entry name" value="Urocanate hydratase"/>
    <property type="match status" value="1"/>
</dbReference>
<dbReference type="Gene3D" id="3.40.50.10730">
    <property type="entry name" value="Urocanase like domains"/>
    <property type="match status" value="1"/>
</dbReference>
<dbReference type="Gene3D" id="3.40.1770.10">
    <property type="entry name" value="Urocanase superfamily"/>
    <property type="match status" value="1"/>
</dbReference>
<dbReference type="HAMAP" id="MF_00577">
    <property type="entry name" value="HutU"/>
    <property type="match status" value="1"/>
</dbReference>
<dbReference type="InterPro" id="IPR055351">
    <property type="entry name" value="Urocanase"/>
</dbReference>
<dbReference type="InterPro" id="IPR023637">
    <property type="entry name" value="Urocanase-like"/>
</dbReference>
<dbReference type="InterPro" id="IPR035401">
    <property type="entry name" value="Urocanase_C"/>
</dbReference>
<dbReference type="InterPro" id="IPR038364">
    <property type="entry name" value="Urocanase_central_sf"/>
</dbReference>
<dbReference type="InterPro" id="IPR023636">
    <property type="entry name" value="Urocanase_CS"/>
</dbReference>
<dbReference type="InterPro" id="IPR035400">
    <property type="entry name" value="Urocanase_N"/>
</dbReference>
<dbReference type="InterPro" id="IPR035085">
    <property type="entry name" value="Urocanase_Rossmann-like"/>
</dbReference>
<dbReference type="InterPro" id="IPR036190">
    <property type="entry name" value="Urocanase_sf"/>
</dbReference>
<dbReference type="NCBIfam" id="TIGR01228">
    <property type="entry name" value="hutU"/>
    <property type="match status" value="1"/>
</dbReference>
<dbReference type="NCBIfam" id="NF003820">
    <property type="entry name" value="PRK05414.1"/>
    <property type="match status" value="1"/>
</dbReference>
<dbReference type="PANTHER" id="PTHR12216">
    <property type="entry name" value="UROCANATE HYDRATASE"/>
    <property type="match status" value="1"/>
</dbReference>
<dbReference type="PANTHER" id="PTHR12216:SF4">
    <property type="entry name" value="UROCANATE HYDRATASE"/>
    <property type="match status" value="1"/>
</dbReference>
<dbReference type="Pfam" id="PF01175">
    <property type="entry name" value="Urocanase"/>
    <property type="match status" value="1"/>
</dbReference>
<dbReference type="Pfam" id="PF17392">
    <property type="entry name" value="Urocanase_C"/>
    <property type="match status" value="1"/>
</dbReference>
<dbReference type="Pfam" id="PF17391">
    <property type="entry name" value="Urocanase_N"/>
    <property type="match status" value="1"/>
</dbReference>
<dbReference type="PIRSF" id="PIRSF001423">
    <property type="entry name" value="Urocanate_hydrat"/>
    <property type="match status" value="1"/>
</dbReference>
<dbReference type="SUPFAM" id="SSF111326">
    <property type="entry name" value="Urocanase"/>
    <property type="match status" value="1"/>
</dbReference>
<dbReference type="PROSITE" id="PS01233">
    <property type="entry name" value="UROCANASE"/>
    <property type="match status" value="1"/>
</dbReference>
<sequence length="557" mass="60718">MTDNNKYRDVEIRAPRGNKLTAKSWLTEAPLRMLMNNLDPQVAENPKELVVYGGIGRAARNWACYDKIVETLTRLEDDETLLVQSGKPVGVFKTHSNAPRVLIANSNLVPHWANWEHFNELDAKGLAMYGQMTAGSWIYIGSQGIVQGTYETFVEAGRQHYGGSLKGKWVLTAGLGGMGGAQPLAATLAGACSLNIECQQSRIDFRLETRYVDEQATDLDDALARIAKYTAEGKAISIALHGNAAEILPELVKRGVRPDMVTDQTSAHDPLNGYLPAGWTWEQYRDRAQTEPAAVVKAAKQSMAVHVQAMLDFQKQGIPTFDYGNNIRQMAKEEGVANAFDFPGFVPAYIRPLFCRGVGPFRWAALSGEAEDIYKTDAKVKELIPDDAHLHRWLDMARERISFQGLPARICWVGLGLRAKLGLAFNEMVRSGELSAPVVIGRDHLDSGSVSSPNRETEAMRDGSDAVSDWPLLNALLNTAGGATWVSLHHGGGVGMGFSQHSGMVIVCDGTDEAAERIARVLTNDPGTGVMRHADAGYDIAIDCAKEQGLDLPMITG</sequence>
<organism>
    <name type="scientific">Pseudomonas putida (strain ATCC 700007 / DSM 6899 / JCM 31910 / BCRC 17059 / LMG 24140 / F1)</name>
    <dbReference type="NCBI Taxonomy" id="351746"/>
    <lineage>
        <taxon>Bacteria</taxon>
        <taxon>Pseudomonadati</taxon>
        <taxon>Pseudomonadota</taxon>
        <taxon>Gammaproteobacteria</taxon>
        <taxon>Pseudomonadales</taxon>
        <taxon>Pseudomonadaceae</taxon>
        <taxon>Pseudomonas</taxon>
    </lineage>
</organism>
<comment type="function">
    <text evidence="1">Catalyzes the conversion of urocanate to 4-imidazolone-5-propionate.</text>
</comment>
<comment type="catalytic activity">
    <reaction evidence="1">
        <text>4-imidazolone-5-propanoate = trans-urocanate + H2O</text>
        <dbReference type="Rhea" id="RHEA:13101"/>
        <dbReference type="ChEBI" id="CHEBI:15377"/>
        <dbReference type="ChEBI" id="CHEBI:17771"/>
        <dbReference type="ChEBI" id="CHEBI:77893"/>
        <dbReference type="EC" id="4.2.1.49"/>
    </reaction>
</comment>
<comment type="cofactor">
    <cofactor evidence="1">
        <name>NAD(+)</name>
        <dbReference type="ChEBI" id="CHEBI:57540"/>
    </cofactor>
    <text evidence="1">Binds 1 NAD(+) per subunit.</text>
</comment>
<comment type="pathway">
    <text evidence="1">Amino-acid degradation; L-histidine degradation into L-glutamate; N-formimidoyl-L-glutamate from L-histidine: step 2/3.</text>
</comment>
<comment type="subcellular location">
    <subcellularLocation>
        <location evidence="1">Cytoplasm</location>
    </subcellularLocation>
</comment>
<comment type="similarity">
    <text evidence="1">Belongs to the urocanase family.</text>
</comment>
<accession>A5WA67</accession>
<reference key="1">
    <citation type="submission" date="2007-05" db="EMBL/GenBank/DDBJ databases">
        <title>Complete sequence of Pseudomonas putida F1.</title>
        <authorList>
            <consortium name="US DOE Joint Genome Institute"/>
            <person name="Copeland A."/>
            <person name="Lucas S."/>
            <person name="Lapidus A."/>
            <person name="Barry K."/>
            <person name="Detter J.C."/>
            <person name="Glavina del Rio T."/>
            <person name="Hammon N."/>
            <person name="Israni S."/>
            <person name="Dalin E."/>
            <person name="Tice H."/>
            <person name="Pitluck S."/>
            <person name="Chain P."/>
            <person name="Malfatti S."/>
            <person name="Shin M."/>
            <person name="Vergez L."/>
            <person name="Schmutz J."/>
            <person name="Larimer F."/>
            <person name="Land M."/>
            <person name="Hauser L."/>
            <person name="Kyrpides N."/>
            <person name="Lykidis A."/>
            <person name="Parales R."/>
            <person name="Richardson P."/>
        </authorList>
    </citation>
    <scope>NUCLEOTIDE SEQUENCE [LARGE SCALE GENOMIC DNA]</scope>
    <source>
        <strain>ATCC 700007 / DSM 6899 / JCM 31910 / BCRC 17059 / LMG 24140 / F1</strain>
    </source>
</reference>
<name>HUTU_PSEP1</name>
<keyword id="KW-0963">Cytoplasm</keyword>
<keyword id="KW-0369">Histidine metabolism</keyword>
<keyword id="KW-0456">Lyase</keyword>
<keyword id="KW-0520">NAD</keyword>